<accession>E9Q368</accession>
<name>TARB1_MOUSE</name>
<proteinExistence type="evidence at protein level"/>
<organism>
    <name type="scientific">Mus musculus</name>
    <name type="common">Mouse</name>
    <dbReference type="NCBI Taxonomy" id="10090"/>
    <lineage>
        <taxon>Eukaryota</taxon>
        <taxon>Metazoa</taxon>
        <taxon>Chordata</taxon>
        <taxon>Craniata</taxon>
        <taxon>Vertebrata</taxon>
        <taxon>Euteleostomi</taxon>
        <taxon>Mammalia</taxon>
        <taxon>Eutheria</taxon>
        <taxon>Euarchontoglires</taxon>
        <taxon>Glires</taxon>
        <taxon>Rodentia</taxon>
        <taxon>Myomorpha</taxon>
        <taxon>Muroidea</taxon>
        <taxon>Muridae</taxon>
        <taxon>Murinae</taxon>
        <taxon>Mus</taxon>
        <taxon>Mus</taxon>
    </lineage>
</organism>
<feature type="chain" id="PRO_0000462210" description="tRNA (guanosine(18)-2'-O)-methyltransferase TARBP1">
    <location>
        <begin position="1"/>
        <end position="1579"/>
    </location>
</feature>
<feature type="binding site" evidence="1">
    <location>
        <position position="1501"/>
    </location>
    <ligand>
        <name>S-adenosyl-L-homocysteine</name>
        <dbReference type="ChEBI" id="CHEBI:57856"/>
    </ligand>
</feature>
<feature type="binding site" evidence="1">
    <location>
        <position position="1524"/>
    </location>
    <ligand>
        <name>S-adenosyl-L-homocysteine</name>
        <dbReference type="ChEBI" id="CHEBI:57856"/>
    </ligand>
</feature>
<feature type="binding site" evidence="1">
    <location>
        <position position="1544"/>
    </location>
    <ligand>
        <name>S-adenosyl-L-homocysteine</name>
        <dbReference type="ChEBI" id="CHEBI:57856"/>
    </ligand>
</feature>
<feature type="binding site" evidence="1">
    <location>
        <position position="1546"/>
    </location>
    <ligand>
        <name>S-adenosyl-L-homocysteine</name>
        <dbReference type="ChEBI" id="CHEBI:57856"/>
    </ligand>
</feature>
<feature type="binding site" evidence="1">
    <location>
        <position position="1553"/>
    </location>
    <ligand>
        <name>S-adenosyl-L-homocysteine</name>
        <dbReference type="ChEBI" id="CHEBI:57856"/>
    </ligand>
</feature>
<feature type="modified residue" description="N-acetylmethionine" evidence="1">
    <location>
        <position position="1"/>
    </location>
</feature>
<dbReference type="EC" id="2.1.1.34" evidence="1"/>
<dbReference type="EMBL" id="AC118255">
    <property type="status" value="NOT_ANNOTATED_CDS"/>
    <property type="molecule type" value="Genomic_DNA"/>
</dbReference>
<dbReference type="RefSeq" id="NP_001153379.1">
    <property type="nucleotide sequence ID" value="NM_001159907.1"/>
</dbReference>
<dbReference type="SMR" id="E9Q368"/>
<dbReference type="FunCoup" id="E9Q368">
    <property type="interactions" value="1323"/>
</dbReference>
<dbReference type="STRING" id="10090.ENSMUSP00000129815"/>
<dbReference type="GlyGen" id="E9Q368">
    <property type="glycosylation" value="2 sites, 1 O-linked glycan (2 sites)"/>
</dbReference>
<dbReference type="iPTMnet" id="E9Q368"/>
<dbReference type="PaxDb" id="10090-ENSMUSP00000129815"/>
<dbReference type="PeptideAtlas" id="E9Q368"/>
<dbReference type="ProteomicsDB" id="354915"/>
<dbReference type="Antibodypedia" id="20805">
    <property type="antibodies" value="76 antibodies from 25 providers"/>
</dbReference>
<dbReference type="Ensembl" id="ENSMUST00000170518.3">
    <property type="protein sequence ID" value="ENSMUSP00000129815.2"/>
    <property type="gene ID" value="ENSMUSG00000090290.3"/>
</dbReference>
<dbReference type="GeneID" id="212728"/>
<dbReference type="KEGG" id="mmu:212728"/>
<dbReference type="UCSC" id="uc012gne.1">
    <property type="organism name" value="mouse"/>
</dbReference>
<dbReference type="AGR" id="MGI:4936930"/>
<dbReference type="CTD" id="6894"/>
<dbReference type="MGI" id="MGI:4936930">
    <property type="gene designation" value="Tarbp1"/>
</dbReference>
<dbReference type="VEuPathDB" id="HostDB:ENSMUSG00000090290"/>
<dbReference type="eggNOG" id="KOG0839">
    <property type="taxonomic scope" value="Eukaryota"/>
</dbReference>
<dbReference type="GeneTree" id="ENSGT00390000003939"/>
<dbReference type="HOGENOM" id="CLU_002618_1_1_1"/>
<dbReference type="InParanoid" id="E9Q368"/>
<dbReference type="OMA" id="ANIPRCK"/>
<dbReference type="OrthoDB" id="241340at2759"/>
<dbReference type="PhylomeDB" id="E9Q368"/>
<dbReference type="TreeFam" id="TF314976"/>
<dbReference type="BioGRID-ORCS" id="212728">
    <property type="hits" value="1 hit in 72 CRISPR screens"/>
</dbReference>
<dbReference type="ChiTaRS" id="Tarbp1">
    <property type="organism name" value="mouse"/>
</dbReference>
<dbReference type="Proteomes" id="UP000000589">
    <property type="component" value="Chromosome 8"/>
</dbReference>
<dbReference type="RNAct" id="E9Q368">
    <property type="molecule type" value="protein"/>
</dbReference>
<dbReference type="Bgee" id="ENSMUSG00000090290">
    <property type="expression patterns" value="Expressed in metanephric ureteric bud and 206 other cell types or tissues"/>
</dbReference>
<dbReference type="GO" id="GO:0003723">
    <property type="term" value="F:RNA binding"/>
    <property type="evidence" value="ECO:0007669"/>
    <property type="project" value="InterPro"/>
</dbReference>
<dbReference type="GO" id="GO:0141100">
    <property type="term" value="F:tRNA (guanine(18)-2'-O)-methyltransferase activity"/>
    <property type="evidence" value="ECO:0007669"/>
    <property type="project" value="Ensembl"/>
</dbReference>
<dbReference type="GO" id="GO:0030488">
    <property type="term" value="P:tRNA methylation"/>
    <property type="evidence" value="ECO:0000250"/>
    <property type="project" value="UniProtKB"/>
</dbReference>
<dbReference type="CDD" id="cd18091">
    <property type="entry name" value="SpoU-like_TRM3-like"/>
    <property type="match status" value="1"/>
</dbReference>
<dbReference type="FunFam" id="3.40.1280.10:FF:000010">
    <property type="entry name" value="probable methyltransferase TARBP1"/>
    <property type="match status" value="1"/>
</dbReference>
<dbReference type="Gene3D" id="3.40.1280.10">
    <property type="match status" value="1"/>
</dbReference>
<dbReference type="InterPro" id="IPR029028">
    <property type="entry name" value="Alpha/beta_knot_MTases"/>
</dbReference>
<dbReference type="InterPro" id="IPR016024">
    <property type="entry name" value="ARM-type_fold"/>
</dbReference>
<dbReference type="InterPro" id="IPR025806">
    <property type="entry name" value="Prob_MeTrfase_TARBP1"/>
</dbReference>
<dbReference type="InterPro" id="IPR001537">
    <property type="entry name" value="SpoU_MeTrfase"/>
</dbReference>
<dbReference type="InterPro" id="IPR056921">
    <property type="entry name" value="TARBP1_dom"/>
</dbReference>
<dbReference type="InterPro" id="IPR045330">
    <property type="entry name" value="Trm3/TARBP1"/>
</dbReference>
<dbReference type="InterPro" id="IPR044748">
    <property type="entry name" value="Trm3/TARBP1_C"/>
</dbReference>
<dbReference type="InterPro" id="IPR029026">
    <property type="entry name" value="tRNA_m1G_MTases_N"/>
</dbReference>
<dbReference type="PANTHER" id="PTHR12029:SF11">
    <property type="entry name" value="METHYLTRANSFERASE TARBP1-RELATED"/>
    <property type="match status" value="1"/>
</dbReference>
<dbReference type="PANTHER" id="PTHR12029">
    <property type="entry name" value="RNA METHYLTRANSFERASE"/>
    <property type="match status" value="1"/>
</dbReference>
<dbReference type="Pfam" id="PF00588">
    <property type="entry name" value="SpoU_methylase"/>
    <property type="match status" value="1"/>
</dbReference>
<dbReference type="Pfam" id="PF25050">
    <property type="entry name" value="TARBP1"/>
    <property type="match status" value="1"/>
</dbReference>
<dbReference type="SUPFAM" id="SSF75217">
    <property type="entry name" value="alpha/beta knot"/>
    <property type="match status" value="1"/>
</dbReference>
<dbReference type="SUPFAM" id="SSF48371">
    <property type="entry name" value="ARM repeat"/>
    <property type="match status" value="1"/>
</dbReference>
<dbReference type="PROSITE" id="PS51624">
    <property type="entry name" value="SAM_MT_TRMH_2"/>
    <property type="match status" value="1"/>
</dbReference>
<keyword id="KW-0007">Acetylation</keyword>
<keyword id="KW-0489">Methyltransferase</keyword>
<keyword id="KW-1185">Reference proteome</keyword>
<keyword id="KW-0694">RNA-binding</keyword>
<keyword id="KW-0949">S-adenosyl-L-methionine</keyword>
<keyword id="KW-0808">Transferase</keyword>
<protein>
    <recommendedName>
        <fullName>tRNA (guanosine(18)-2'-O)-methyltransferase TARBP1</fullName>
        <ecNumber evidence="1">2.1.1.34</ecNumber>
    </recommendedName>
    <alternativeName>
        <fullName>TAR RNA-binding protein 1</fullName>
    </alternativeName>
</protein>
<comment type="function">
    <text evidence="1">S-adenosyl-L-methionine-dependent 2'-O-ribose methyltransferase that catalyzes the formation of 2'-O-methylguanosine at position 18 (Gm18) in a subset of tRNA. Selectively mediates Gm18 methylation of tRNAGln-TTG/CTG and tRNASer-TGA/GCT. Gm18 modification can enhance the stability of modified tRNAs.</text>
</comment>
<comment type="catalytic activity">
    <reaction evidence="1">
        <text>guanosine(18) in tRNA + S-adenosyl-L-methionine = 2'-O-methylguanosine(18) in tRNA + S-adenosyl-L-homocysteine + H(+)</text>
        <dbReference type="Rhea" id="RHEA:20077"/>
        <dbReference type="Rhea" id="RHEA-COMP:10190"/>
        <dbReference type="Rhea" id="RHEA-COMP:10192"/>
        <dbReference type="ChEBI" id="CHEBI:15378"/>
        <dbReference type="ChEBI" id="CHEBI:57856"/>
        <dbReference type="ChEBI" id="CHEBI:59789"/>
        <dbReference type="ChEBI" id="CHEBI:74269"/>
        <dbReference type="ChEBI" id="CHEBI:74445"/>
        <dbReference type="EC" id="2.1.1.34"/>
    </reaction>
    <physiologicalReaction direction="left-to-right" evidence="1">
        <dbReference type="Rhea" id="RHEA:20078"/>
    </physiologicalReaction>
</comment>
<comment type="subunit">
    <text evidence="1">Monomer and homodimer.</text>
</comment>
<comment type="similarity">
    <text evidence="2">Belongs to the class IV-like SAM-binding methyltransferase superfamily. RNA methyltransferase TrmH family.</text>
</comment>
<evidence type="ECO:0000250" key="1">
    <source>
        <dbReference type="UniProtKB" id="Q13395"/>
    </source>
</evidence>
<evidence type="ECO:0000305" key="2"/>
<evidence type="ECO:0000312" key="3">
    <source>
        <dbReference type="MGI" id="MGI:4936930"/>
    </source>
</evidence>
<gene>
    <name evidence="3" type="primary">Tarbp1</name>
</gene>
<reference key="1">
    <citation type="journal article" date="2009" name="PLoS Biol.">
        <title>Lineage-specific biology revealed by a finished genome assembly of the mouse.</title>
        <authorList>
            <person name="Church D.M."/>
            <person name="Goodstadt L."/>
            <person name="Hillier L.W."/>
            <person name="Zody M.C."/>
            <person name="Goldstein S."/>
            <person name="She X."/>
            <person name="Bult C.J."/>
            <person name="Agarwala R."/>
            <person name="Cherry J.L."/>
            <person name="DiCuccio M."/>
            <person name="Hlavina W."/>
            <person name="Kapustin Y."/>
            <person name="Meric P."/>
            <person name="Maglott D."/>
            <person name="Birtle Z."/>
            <person name="Marques A.C."/>
            <person name="Graves T."/>
            <person name="Zhou S."/>
            <person name="Teague B."/>
            <person name="Potamousis K."/>
            <person name="Churas C."/>
            <person name="Place M."/>
            <person name="Herschleb J."/>
            <person name="Runnheim R."/>
            <person name="Forrest D."/>
            <person name="Amos-Landgraf J."/>
            <person name="Schwartz D.C."/>
            <person name="Cheng Z."/>
            <person name="Lindblad-Toh K."/>
            <person name="Eichler E.E."/>
            <person name="Ponting C.P."/>
        </authorList>
    </citation>
    <scope>NUCLEOTIDE SEQUENCE [LARGE SCALE GENOMIC DNA]</scope>
    <source>
        <strain>C57BL/6J</strain>
    </source>
</reference>
<reference key="2">
    <citation type="journal article" date="2010" name="Cell">
        <title>A tissue-specific atlas of mouse protein phosphorylation and expression.</title>
        <authorList>
            <person name="Huttlin E.L."/>
            <person name="Jedrychowski M.P."/>
            <person name="Elias J.E."/>
            <person name="Goswami T."/>
            <person name="Rad R."/>
            <person name="Beausoleil S.A."/>
            <person name="Villen J."/>
            <person name="Haas W."/>
            <person name="Sowa M.E."/>
            <person name="Gygi S.P."/>
        </authorList>
    </citation>
    <scope>IDENTIFICATION BY MASS SPECTROMETRY [LARGE SCALE ANALYSIS]</scope>
</reference>
<sequence length="1579" mass="175691">MERVLADALLTQSREPGELLGALCGGEASAERAETLRLVLQRLEERGAGAGALAKAAHEVARDHLVPLLHASQGGGPARPRVLRAASAALRSCARLAGPELAVTLAEEALRELPSAPAVELLAAVAPCLRAPEDAPLLRRLGRASVELALAGDAPPAVGARLLPALAQSAEPALRAAWDALSSAGPGAEGSTGPELLVLSALAEKLLTNHERHGDLDARLCGRFWRTVQAGLGRAQDGLTRKRARYLLQRAVQVSAELAVDCSCSPQDTKGPSLFWWSEKRKDELLKFWENYILIMEILEGNQIHVIKPALPKLNRLFECAVSEENGCWLFHPSWHTCIYKRMFESENKILAKEGVIHFLELYDVKSLPYSPELSEFITGPLMDALSESCLYSRSPGQPLGSDSPLGLKLQKFLVTYTSLLPEETKSCFLLKLIQRMADRHWCAVPVLFLSRALASIPSCKALGGEGLLALRDVLQRTMITHQVLLRGAAQCYLLQTAMRLVDVEKVSLSDISAFLLSLRQEESLGRGTVLWTELCDWLRVNERYFKQSSLGGSDGQEASLNAYVKNLVQEFVKSPGWEKESSFMPDWLDARLTALMVLLAVDVEGLKTKFREKQRTQNVLRIFLDPLLDALGKLGTNAYMPLLRTDRCLQLLVRLLHSCVPRRPGAQDDEVSTALQGSIMSASESVSQFVLRRLTMNELQDVADLDRCQLYLTVLSELMSLQVKLGWKAGNPISRVLSPLKNACVRHLQEAEDRQEPTLSHQVQRVVSMAALAALCEAVDQYPVLQPDSPNAEPVDRFLSALPLNHVLQKPRSEEQSIGVCPLENGSVFEESLSSKGWGKVVAQYLHDQWVCLSFLLRKHHHLIPSTESDVLEGFLPTAETPVQALQAALDVLTVLPAGRILPVFRCMEVLVPKLLTSEETLCIESFDVAWKIISSLSNTQLTFWPNLKAFVHFVFDHEILTIAAKLKGQVYFKIKEIMCKMIEMSSIKSGVFNILIRHCCQSWLVAASGVSQGSFSSAKDYSELVLEACVFGTVFRRDQRLIQDVQTFIENLGQGCAANVIIENAKREDYYVRICAIKFLCLLDGSDVSHKLFLEALAIKLLDKDESASRSRTRYHENSLQHRVKNRVWQTLLVLFPAFDQNFLHGIIDKVFHAGFTNNQASIKYFIEWLIILILHKFPEFLPKFWACFSYGEEKIKASICTFLSVLSHLDIIVQNIPEKKLVLKQALTVALQWCLSHNFSVRLYALVALKKAWHLCKTLQFEECGAWTAVIECSLSQAESMHGAGNARKNWQRIQDHFFFSTFHPLKDYCLETIFYTLPRLSGVTGEEWIALDKFANFTDIPSNAGSQWYLSGTALGELSPGDWSQQDQGSTLGEADSQSEWADVQKKIIPWGQSALESDLELEFQDRAAKLGKSISRLIVVASLIDKPTNLGGLCRTCEVFGAAVLVVGSLQCVSDRQFQHLSVSAEQWLPLVEVRPSQLMNYLQQKKAEGYTVIGVEQTAQSSDLAQYRFPEKSLLLLGNEREGIPANLIQQLDVCVEIPQQGIIRSLNVHVSGALLIWEYTRQQLLGCAEPPS</sequence>